<keyword id="KW-0997">Cell inner membrane</keyword>
<keyword id="KW-1003">Cell membrane</keyword>
<keyword id="KW-0472">Membrane</keyword>
<accession>Q6FZZ6</accession>
<gene>
    <name type="ordered locus">BQ05520</name>
</gene>
<organism>
    <name type="scientific">Bartonella quintana (strain Toulouse)</name>
    <name type="common">Rochalimaea quintana</name>
    <dbReference type="NCBI Taxonomy" id="283165"/>
    <lineage>
        <taxon>Bacteria</taxon>
        <taxon>Pseudomonadati</taxon>
        <taxon>Pseudomonadota</taxon>
        <taxon>Alphaproteobacteria</taxon>
        <taxon>Hyphomicrobiales</taxon>
        <taxon>Bartonellaceae</taxon>
        <taxon>Bartonella</taxon>
    </lineage>
</organism>
<proteinExistence type="inferred from homology"/>
<comment type="function">
    <text evidence="1">Could be involved in insertion of integral membrane proteins into the membrane.</text>
</comment>
<comment type="subcellular location">
    <subcellularLocation>
        <location evidence="1">Cell inner membrane</location>
        <topology evidence="1">Peripheral membrane protein</topology>
        <orientation evidence="1">Cytoplasmic side</orientation>
    </subcellularLocation>
</comment>
<comment type="similarity">
    <text evidence="1">Belongs to the UPF0161 family.</text>
</comment>
<reference key="1">
    <citation type="journal article" date="2004" name="Proc. Natl. Acad. Sci. U.S.A.">
        <title>The louse-borne human pathogen Bartonella quintana is a genomic derivative of the zoonotic agent Bartonella henselae.</title>
        <authorList>
            <person name="Alsmark U.C.M."/>
            <person name="Frank A.C."/>
            <person name="Karlberg E.O."/>
            <person name="Legault B.-A."/>
            <person name="Ardell D.H."/>
            <person name="Canbaeck B."/>
            <person name="Eriksson A.-S."/>
            <person name="Naeslund A.K."/>
            <person name="Handley S.A."/>
            <person name="Huvet M."/>
            <person name="La Scola B."/>
            <person name="Holmberg M."/>
            <person name="Andersson S.G.E."/>
        </authorList>
    </citation>
    <scope>NUCLEOTIDE SEQUENCE [LARGE SCALE GENOMIC DNA]</scope>
    <source>
        <strain>Toulouse</strain>
    </source>
</reference>
<sequence>MFKLHPQKKKTQTRNYTGPWRKTPGRLLGLLLIRFYQITLSSFIGNQCRHAPTCSEYIYEAIARHGLWAGAWMGLFRIMRCGPFGTHGFDPVPTSLGNSYYFYKPWCYWKISARHNK</sequence>
<name>YIDD_BARQU</name>
<feature type="chain" id="PRO_0000253081" description="Putative membrane protein insertion efficiency factor">
    <location>
        <begin position="1"/>
        <end position="117"/>
    </location>
</feature>
<evidence type="ECO:0000255" key="1">
    <source>
        <dbReference type="HAMAP-Rule" id="MF_00386"/>
    </source>
</evidence>
<protein>
    <recommendedName>
        <fullName evidence="1">Putative membrane protein insertion efficiency factor</fullName>
    </recommendedName>
</protein>
<dbReference type="EMBL" id="BX897700">
    <property type="protein sequence ID" value="CAF26047.1"/>
    <property type="molecule type" value="Genomic_DNA"/>
</dbReference>
<dbReference type="KEGG" id="bqu:BQ05520"/>
<dbReference type="eggNOG" id="COG0759">
    <property type="taxonomic scope" value="Bacteria"/>
</dbReference>
<dbReference type="HOGENOM" id="CLU_144811_0_1_5"/>
<dbReference type="OrthoDB" id="9801753at2"/>
<dbReference type="Proteomes" id="UP000000597">
    <property type="component" value="Chromosome"/>
</dbReference>
<dbReference type="GO" id="GO:0005886">
    <property type="term" value="C:plasma membrane"/>
    <property type="evidence" value="ECO:0007669"/>
    <property type="project" value="UniProtKB-SubCell"/>
</dbReference>
<dbReference type="HAMAP" id="MF_00386">
    <property type="entry name" value="UPF0161_YidD"/>
    <property type="match status" value="1"/>
</dbReference>
<dbReference type="InterPro" id="IPR002696">
    <property type="entry name" value="Membr_insert_effic_factor_YidD"/>
</dbReference>
<dbReference type="NCBIfam" id="TIGR00278">
    <property type="entry name" value="membrane protein insertion efficiency factor YidD"/>
    <property type="match status" value="1"/>
</dbReference>
<dbReference type="PANTHER" id="PTHR33383">
    <property type="entry name" value="MEMBRANE PROTEIN INSERTION EFFICIENCY FACTOR-RELATED"/>
    <property type="match status" value="1"/>
</dbReference>
<dbReference type="PANTHER" id="PTHR33383:SF1">
    <property type="entry name" value="MEMBRANE PROTEIN INSERTION EFFICIENCY FACTOR-RELATED"/>
    <property type="match status" value="1"/>
</dbReference>
<dbReference type="Pfam" id="PF01809">
    <property type="entry name" value="YidD"/>
    <property type="match status" value="1"/>
</dbReference>
<dbReference type="SMART" id="SM01234">
    <property type="entry name" value="Haemolytic"/>
    <property type="match status" value="1"/>
</dbReference>